<protein>
    <recommendedName>
        <fullName evidence="1">Ribosome maturation factor RimP</fullName>
    </recommendedName>
</protein>
<accession>Q03WH0</accession>
<gene>
    <name evidence="1" type="primary">rimP</name>
    <name type="ordered locus">LEUM_1359</name>
</gene>
<evidence type="ECO:0000255" key="1">
    <source>
        <dbReference type="HAMAP-Rule" id="MF_01077"/>
    </source>
</evidence>
<proteinExistence type="inferred from homology"/>
<name>RIMP_LEUMM</name>
<comment type="function">
    <text evidence="1">Required for maturation of 30S ribosomal subunits.</text>
</comment>
<comment type="subcellular location">
    <subcellularLocation>
        <location evidence="1">Cytoplasm</location>
    </subcellularLocation>
</comment>
<comment type="similarity">
    <text evidence="1">Belongs to the RimP family.</text>
</comment>
<dbReference type="EMBL" id="CP000414">
    <property type="protein sequence ID" value="ABJ62452.1"/>
    <property type="molecule type" value="Genomic_DNA"/>
</dbReference>
<dbReference type="RefSeq" id="WP_002815024.1">
    <property type="nucleotide sequence ID" value="NC_008531.1"/>
</dbReference>
<dbReference type="SMR" id="Q03WH0"/>
<dbReference type="EnsemblBacteria" id="ABJ62452">
    <property type="protein sequence ID" value="ABJ62452"/>
    <property type="gene ID" value="LEUM_1359"/>
</dbReference>
<dbReference type="GeneID" id="29577050"/>
<dbReference type="KEGG" id="lme:LEUM_1359"/>
<dbReference type="eggNOG" id="COG0779">
    <property type="taxonomic scope" value="Bacteria"/>
</dbReference>
<dbReference type="HOGENOM" id="CLU_070525_2_2_9"/>
<dbReference type="Proteomes" id="UP000000362">
    <property type="component" value="Chromosome"/>
</dbReference>
<dbReference type="GO" id="GO:0005829">
    <property type="term" value="C:cytosol"/>
    <property type="evidence" value="ECO:0007669"/>
    <property type="project" value="TreeGrafter"/>
</dbReference>
<dbReference type="GO" id="GO:0000028">
    <property type="term" value="P:ribosomal small subunit assembly"/>
    <property type="evidence" value="ECO:0007669"/>
    <property type="project" value="TreeGrafter"/>
</dbReference>
<dbReference type="GO" id="GO:0006412">
    <property type="term" value="P:translation"/>
    <property type="evidence" value="ECO:0007669"/>
    <property type="project" value="TreeGrafter"/>
</dbReference>
<dbReference type="CDD" id="cd01734">
    <property type="entry name" value="YlxS_C"/>
    <property type="match status" value="1"/>
</dbReference>
<dbReference type="Gene3D" id="2.30.30.180">
    <property type="entry name" value="Ribosome maturation factor RimP, C-terminal domain"/>
    <property type="match status" value="1"/>
</dbReference>
<dbReference type="Gene3D" id="3.30.300.70">
    <property type="entry name" value="RimP-like superfamily, N-terminal"/>
    <property type="match status" value="1"/>
</dbReference>
<dbReference type="HAMAP" id="MF_01077">
    <property type="entry name" value="RimP"/>
    <property type="match status" value="1"/>
</dbReference>
<dbReference type="InterPro" id="IPR003728">
    <property type="entry name" value="Ribosome_maturation_RimP"/>
</dbReference>
<dbReference type="InterPro" id="IPR028998">
    <property type="entry name" value="RimP_C"/>
</dbReference>
<dbReference type="InterPro" id="IPR036847">
    <property type="entry name" value="RimP_C_sf"/>
</dbReference>
<dbReference type="InterPro" id="IPR028989">
    <property type="entry name" value="RimP_N"/>
</dbReference>
<dbReference type="InterPro" id="IPR035956">
    <property type="entry name" value="RimP_N_sf"/>
</dbReference>
<dbReference type="PANTHER" id="PTHR33867">
    <property type="entry name" value="RIBOSOME MATURATION FACTOR RIMP"/>
    <property type="match status" value="1"/>
</dbReference>
<dbReference type="PANTHER" id="PTHR33867:SF1">
    <property type="entry name" value="RIBOSOME MATURATION FACTOR RIMP"/>
    <property type="match status" value="1"/>
</dbReference>
<dbReference type="Pfam" id="PF17384">
    <property type="entry name" value="DUF150_C"/>
    <property type="match status" value="1"/>
</dbReference>
<dbReference type="Pfam" id="PF02576">
    <property type="entry name" value="RimP_N"/>
    <property type="match status" value="1"/>
</dbReference>
<dbReference type="SUPFAM" id="SSF74942">
    <property type="entry name" value="YhbC-like, C-terminal domain"/>
    <property type="match status" value="1"/>
</dbReference>
<dbReference type="SUPFAM" id="SSF75420">
    <property type="entry name" value="YhbC-like, N-terminal domain"/>
    <property type="match status" value="1"/>
</dbReference>
<sequence>MANKTEQTVIDLISPIIEAHNDLLWDLTFTKEGGQKVLRILLDKPDHQFITMNDLTLFTQEVNELLDTVDPDPIPEAYVLDISSPGADRPLKELWHFEWAKEANENILVSLFVAKEGQKKWQGKIADLNKDGLTLTTTNGRLPLTFDEIAKAILDVQF</sequence>
<reference key="1">
    <citation type="journal article" date="2006" name="Proc. Natl. Acad. Sci. U.S.A.">
        <title>Comparative genomics of the lactic acid bacteria.</title>
        <authorList>
            <person name="Makarova K.S."/>
            <person name="Slesarev A."/>
            <person name="Wolf Y.I."/>
            <person name="Sorokin A."/>
            <person name="Mirkin B."/>
            <person name="Koonin E.V."/>
            <person name="Pavlov A."/>
            <person name="Pavlova N."/>
            <person name="Karamychev V."/>
            <person name="Polouchine N."/>
            <person name="Shakhova V."/>
            <person name="Grigoriev I."/>
            <person name="Lou Y."/>
            <person name="Rohksar D."/>
            <person name="Lucas S."/>
            <person name="Huang K."/>
            <person name="Goodstein D.M."/>
            <person name="Hawkins T."/>
            <person name="Plengvidhya V."/>
            <person name="Welker D."/>
            <person name="Hughes J."/>
            <person name="Goh Y."/>
            <person name="Benson A."/>
            <person name="Baldwin K."/>
            <person name="Lee J.-H."/>
            <person name="Diaz-Muniz I."/>
            <person name="Dosti B."/>
            <person name="Smeianov V."/>
            <person name="Wechter W."/>
            <person name="Barabote R."/>
            <person name="Lorca G."/>
            <person name="Altermann E."/>
            <person name="Barrangou R."/>
            <person name="Ganesan B."/>
            <person name="Xie Y."/>
            <person name="Rawsthorne H."/>
            <person name="Tamir D."/>
            <person name="Parker C."/>
            <person name="Breidt F."/>
            <person name="Broadbent J.R."/>
            <person name="Hutkins R."/>
            <person name="O'Sullivan D."/>
            <person name="Steele J."/>
            <person name="Unlu G."/>
            <person name="Saier M.H. Jr."/>
            <person name="Klaenhammer T."/>
            <person name="Richardson P."/>
            <person name="Kozyavkin S."/>
            <person name="Weimer B.C."/>
            <person name="Mills D.A."/>
        </authorList>
    </citation>
    <scope>NUCLEOTIDE SEQUENCE [LARGE SCALE GENOMIC DNA]</scope>
    <source>
        <strain>ATCC 8293 / DSM 20343 / BCRC 11652 / CCM 1803 / JCM 6124 / NCDO 523 / NBRC 100496 / NCIMB 8023 / NCTC 12954 / NRRL B-1118 / 37Y</strain>
    </source>
</reference>
<feature type="chain" id="PRO_0000384696" description="Ribosome maturation factor RimP">
    <location>
        <begin position="1"/>
        <end position="158"/>
    </location>
</feature>
<organism>
    <name type="scientific">Leuconostoc mesenteroides subsp. mesenteroides (strain ATCC 8293 / DSM 20343 / BCRC 11652 / CCM 1803 / JCM 6124 / NCDO 523 / NBRC 100496 / NCIMB 8023 / NCTC 12954 / NRRL B-1118 / 37Y)</name>
    <dbReference type="NCBI Taxonomy" id="203120"/>
    <lineage>
        <taxon>Bacteria</taxon>
        <taxon>Bacillati</taxon>
        <taxon>Bacillota</taxon>
        <taxon>Bacilli</taxon>
        <taxon>Lactobacillales</taxon>
        <taxon>Lactobacillaceae</taxon>
        <taxon>Leuconostoc</taxon>
    </lineage>
</organism>
<keyword id="KW-0963">Cytoplasm</keyword>
<keyword id="KW-1185">Reference proteome</keyword>
<keyword id="KW-0690">Ribosome biogenesis</keyword>